<evidence type="ECO:0000255" key="1">
    <source>
        <dbReference type="HAMAP-Rule" id="MF_00173"/>
    </source>
</evidence>
<comment type="function">
    <text evidence="1">Regulates arginine biosynthesis genes.</text>
</comment>
<comment type="pathway">
    <text>Amino-acid biosynthesis; L-arginine biosynthesis [regulation].</text>
</comment>
<comment type="subcellular location">
    <subcellularLocation>
        <location evidence="1">Cytoplasm</location>
    </subcellularLocation>
</comment>
<comment type="similarity">
    <text evidence="1">Belongs to the ArgR family.</text>
</comment>
<accession>Q837Z7</accession>
<name>ARGR_ENTFA</name>
<dbReference type="EMBL" id="AE016830">
    <property type="protein sequence ID" value="AAO80498.1"/>
    <property type="molecule type" value="Genomic_DNA"/>
</dbReference>
<dbReference type="RefSeq" id="NP_814427.1">
    <property type="nucleotide sequence ID" value="NC_004668.1"/>
</dbReference>
<dbReference type="RefSeq" id="WP_002371463.1">
    <property type="nucleotide sequence ID" value="NZ_KE136527.1"/>
</dbReference>
<dbReference type="SMR" id="Q837Z7"/>
<dbReference type="STRING" id="226185.EF_0676"/>
<dbReference type="EnsemblBacteria" id="AAO80498">
    <property type="protein sequence ID" value="AAO80498"/>
    <property type="gene ID" value="EF_0676"/>
</dbReference>
<dbReference type="KEGG" id="efa:EF0676"/>
<dbReference type="PATRIC" id="fig|226185.45.peg.2618"/>
<dbReference type="eggNOG" id="COG1438">
    <property type="taxonomic scope" value="Bacteria"/>
</dbReference>
<dbReference type="HOGENOM" id="CLU_097103_3_0_9"/>
<dbReference type="UniPathway" id="UPA00068"/>
<dbReference type="Proteomes" id="UP000001415">
    <property type="component" value="Chromosome"/>
</dbReference>
<dbReference type="GO" id="GO:0005737">
    <property type="term" value="C:cytoplasm"/>
    <property type="evidence" value="ECO:0007669"/>
    <property type="project" value="UniProtKB-SubCell"/>
</dbReference>
<dbReference type="GO" id="GO:0034618">
    <property type="term" value="F:arginine binding"/>
    <property type="evidence" value="ECO:0007669"/>
    <property type="project" value="InterPro"/>
</dbReference>
<dbReference type="GO" id="GO:0003677">
    <property type="term" value="F:DNA binding"/>
    <property type="evidence" value="ECO:0007669"/>
    <property type="project" value="UniProtKB-KW"/>
</dbReference>
<dbReference type="GO" id="GO:0003700">
    <property type="term" value="F:DNA-binding transcription factor activity"/>
    <property type="evidence" value="ECO:0007669"/>
    <property type="project" value="UniProtKB-UniRule"/>
</dbReference>
<dbReference type="GO" id="GO:0006526">
    <property type="term" value="P:L-arginine biosynthetic process"/>
    <property type="evidence" value="ECO:0007669"/>
    <property type="project" value="UniProtKB-UniPathway"/>
</dbReference>
<dbReference type="GO" id="GO:0051259">
    <property type="term" value="P:protein complex oligomerization"/>
    <property type="evidence" value="ECO:0007669"/>
    <property type="project" value="InterPro"/>
</dbReference>
<dbReference type="GO" id="GO:1900079">
    <property type="term" value="P:regulation of arginine biosynthetic process"/>
    <property type="evidence" value="ECO:0007669"/>
    <property type="project" value="UniProtKB-UniRule"/>
</dbReference>
<dbReference type="Gene3D" id="3.30.1360.40">
    <property type="match status" value="1"/>
</dbReference>
<dbReference type="Gene3D" id="1.10.10.10">
    <property type="entry name" value="Winged helix-like DNA-binding domain superfamily/Winged helix DNA-binding domain"/>
    <property type="match status" value="1"/>
</dbReference>
<dbReference type="HAMAP" id="MF_00173">
    <property type="entry name" value="Arg_repressor"/>
    <property type="match status" value="1"/>
</dbReference>
<dbReference type="InterPro" id="IPR001669">
    <property type="entry name" value="Arg_repress"/>
</dbReference>
<dbReference type="InterPro" id="IPR020899">
    <property type="entry name" value="Arg_repress_C"/>
</dbReference>
<dbReference type="InterPro" id="IPR036251">
    <property type="entry name" value="Arg_repress_C_sf"/>
</dbReference>
<dbReference type="InterPro" id="IPR020900">
    <property type="entry name" value="Arg_repress_DNA-bd"/>
</dbReference>
<dbReference type="InterPro" id="IPR036388">
    <property type="entry name" value="WH-like_DNA-bd_sf"/>
</dbReference>
<dbReference type="InterPro" id="IPR036390">
    <property type="entry name" value="WH_DNA-bd_sf"/>
</dbReference>
<dbReference type="NCBIfam" id="TIGR01529">
    <property type="entry name" value="argR_whole"/>
    <property type="match status" value="1"/>
</dbReference>
<dbReference type="PANTHER" id="PTHR34471">
    <property type="entry name" value="ARGININE REPRESSOR"/>
    <property type="match status" value="1"/>
</dbReference>
<dbReference type="PANTHER" id="PTHR34471:SF1">
    <property type="entry name" value="ARGININE REPRESSOR"/>
    <property type="match status" value="1"/>
</dbReference>
<dbReference type="Pfam" id="PF01316">
    <property type="entry name" value="Arg_repressor"/>
    <property type="match status" value="1"/>
</dbReference>
<dbReference type="Pfam" id="PF02863">
    <property type="entry name" value="Arg_repressor_C"/>
    <property type="match status" value="1"/>
</dbReference>
<dbReference type="PRINTS" id="PR01467">
    <property type="entry name" value="ARGREPRESSOR"/>
</dbReference>
<dbReference type="SUPFAM" id="SSF55252">
    <property type="entry name" value="C-terminal domain of arginine repressor"/>
    <property type="match status" value="1"/>
</dbReference>
<dbReference type="SUPFAM" id="SSF46785">
    <property type="entry name" value="Winged helix' DNA-binding domain"/>
    <property type="match status" value="1"/>
</dbReference>
<sequence length="151" mass="17154">MKKAERQRLIKQLIMQQEIETQDELITRLEEIGVRATQATVSRDIREMSIVKTHGADGRVKYAIFSQAQGTSSEEKLRESVKDSVVRMERVQFIVILHTEMGNADVVSNFLDEVAYPEVAGTVAGADTIIVITRSEEDAEHFIERIENMIF</sequence>
<proteinExistence type="inferred from homology"/>
<gene>
    <name evidence="1" type="primary">argR</name>
    <name type="ordered locus">EF_0676</name>
</gene>
<protein>
    <recommendedName>
        <fullName evidence="1">Arginine repressor</fullName>
    </recommendedName>
</protein>
<reference key="1">
    <citation type="journal article" date="2003" name="Science">
        <title>Role of mobile DNA in the evolution of vancomycin-resistant Enterococcus faecalis.</title>
        <authorList>
            <person name="Paulsen I.T."/>
            <person name="Banerjei L."/>
            <person name="Myers G.S.A."/>
            <person name="Nelson K.E."/>
            <person name="Seshadri R."/>
            <person name="Read T.D."/>
            <person name="Fouts D.E."/>
            <person name="Eisen J.A."/>
            <person name="Gill S.R."/>
            <person name="Heidelberg J.F."/>
            <person name="Tettelin H."/>
            <person name="Dodson R.J."/>
            <person name="Umayam L.A."/>
            <person name="Brinkac L.M."/>
            <person name="Beanan M.J."/>
            <person name="Daugherty S.C."/>
            <person name="DeBoy R.T."/>
            <person name="Durkin S.A."/>
            <person name="Kolonay J.F."/>
            <person name="Madupu R."/>
            <person name="Nelson W.C."/>
            <person name="Vamathevan J.J."/>
            <person name="Tran B."/>
            <person name="Upton J."/>
            <person name="Hansen T."/>
            <person name="Shetty J."/>
            <person name="Khouri H.M."/>
            <person name="Utterback T.R."/>
            <person name="Radune D."/>
            <person name="Ketchum K.A."/>
            <person name="Dougherty B.A."/>
            <person name="Fraser C.M."/>
        </authorList>
    </citation>
    <scope>NUCLEOTIDE SEQUENCE [LARGE SCALE GENOMIC DNA]</scope>
    <source>
        <strain>ATCC 700802 / V583</strain>
    </source>
</reference>
<organism>
    <name type="scientific">Enterococcus faecalis (strain ATCC 700802 / V583)</name>
    <dbReference type="NCBI Taxonomy" id="226185"/>
    <lineage>
        <taxon>Bacteria</taxon>
        <taxon>Bacillati</taxon>
        <taxon>Bacillota</taxon>
        <taxon>Bacilli</taxon>
        <taxon>Lactobacillales</taxon>
        <taxon>Enterococcaceae</taxon>
        <taxon>Enterococcus</taxon>
    </lineage>
</organism>
<feature type="chain" id="PRO_0000205089" description="Arginine repressor">
    <location>
        <begin position="1"/>
        <end position="151"/>
    </location>
</feature>
<keyword id="KW-0028">Amino-acid biosynthesis</keyword>
<keyword id="KW-0055">Arginine biosynthesis</keyword>
<keyword id="KW-0963">Cytoplasm</keyword>
<keyword id="KW-0238">DNA-binding</keyword>
<keyword id="KW-1185">Reference proteome</keyword>
<keyword id="KW-0678">Repressor</keyword>
<keyword id="KW-0804">Transcription</keyword>
<keyword id="KW-0805">Transcription regulation</keyword>